<evidence type="ECO:0000255" key="1">
    <source>
        <dbReference type="HAMAP-Rule" id="MF_00323"/>
    </source>
</evidence>
<proteinExistence type="inferred from homology"/>
<protein>
    <recommendedName>
        <fullName evidence="1">Coproporphyrin III ferrochelatase</fullName>
        <ecNumber evidence="1">4.99.1.9</ecNumber>
    </recommendedName>
</protein>
<keyword id="KW-0963">Cytoplasm</keyword>
<keyword id="KW-0350">Heme biosynthesis</keyword>
<keyword id="KW-0408">Iron</keyword>
<keyword id="KW-0456">Lyase</keyword>
<keyword id="KW-0479">Metal-binding</keyword>
<keyword id="KW-0627">Porphyrin biosynthesis</keyword>
<sequence length="346" mass="37567">MLFDALLVLSFGGPEGPDQVMPFLENVTRGRGIPRERLASVAEHYLHFGGVSPINGINRALIAEIEAELGDRGETLPVYFGNRNWDPYVEDAVTAMRDDGVRRAAVFATSAWGGYSSCTQYNEDIARGRAAAGDGAPQLVKLRHYFDHPLLVEMFAESISVAAQSLPADVRDEARLVFTAHSIPVAADDRHGPNLYSRQVAYATRLVAAAAGYSEFDQVWQSRSGPPRIPWLEPDIGDHVTALAERGTKAVIICPIGFVADHIEVVWDLDSEVREQAADLGIAMARARTPNADRRYARLALDLVDELRGDRDPLRVAGVDPAPGCGYSVDGTTCADSPRCVARITG</sequence>
<reference key="1">
    <citation type="submission" date="2006-12" db="EMBL/GenBank/DDBJ databases">
        <title>Complete sequence of chromosome of Mycobacterium sp. KMS.</title>
        <authorList>
            <consortium name="US DOE Joint Genome Institute"/>
            <person name="Copeland A."/>
            <person name="Lucas S."/>
            <person name="Lapidus A."/>
            <person name="Barry K."/>
            <person name="Detter J.C."/>
            <person name="Glavina del Rio T."/>
            <person name="Hammon N."/>
            <person name="Israni S."/>
            <person name="Dalin E."/>
            <person name="Tice H."/>
            <person name="Pitluck S."/>
            <person name="Kiss H."/>
            <person name="Brettin T."/>
            <person name="Bruce D."/>
            <person name="Han C."/>
            <person name="Tapia R."/>
            <person name="Gilna P."/>
            <person name="Schmutz J."/>
            <person name="Larimer F."/>
            <person name="Land M."/>
            <person name="Hauser L."/>
            <person name="Kyrpides N."/>
            <person name="Mikhailova N."/>
            <person name="Miller C.D."/>
            <person name="Richardson P."/>
        </authorList>
    </citation>
    <scope>NUCLEOTIDE SEQUENCE [LARGE SCALE GENOMIC DNA]</scope>
    <source>
        <strain>KMS</strain>
    </source>
</reference>
<gene>
    <name evidence="1" type="primary">cpfC</name>
    <name type="ordered locus">Mkms_2503</name>
</gene>
<feature type="chain" id="PRO_1000019323" description="Coproporphyrin III ferrochelatase">
    <location>
        <begin position="1"/>
        <end position="346"/>
    </location>
</feature>
<feature type="binding site" evidence="1">
    <location>
        <position position="52"/>
    </location>
    <ligand>
        <name>Fe-coproporphyrin III</name>
        <dbReference type="ChEBI" id="CHEBI:68438"/>
    </ligand>
</feature>
<feature type="binding site" evidence="1">
    <location>
        <position position="121"/>
    </location>
    <ligand>
        <name>Fe-coproporphyrin III</name>
        <dbReference type="ChEBI" id="CHEBI:68438"/>
    </ligand>
</feature>
<feature type="binding site" evidence="1">
    <location>
        <position position="181"/>
    </location>
    <ligand>
        <name>Fe(2+)</name>
        <dbReference type="ChEBI" id="CHEBI:29033"/>
    </ligand>
</feature>
<feature type="binding site" evidence="1">
    <location>
        <position position="264"/>
    </location>
    <ligand>
        <name>Fe(2+)</name>
        <dbReference type="ChEBI" id="CHEBI:29033"/>
    </ligand>
</feature>
<organism>
    <name type="scientific">Mycobacterium sp. (strain KMS)</name>
    <dbReference type="NCBI Taxonomy" id="189918"/>
    <lineage>
        <taxon>Bacteria</taxon>
        <taxon>Bacillati</taxon>
        <taxon>Actinomycetota</taxon>
        <taxon>Actinomycetes</taxon>
        <taxon>Mycobacteriales</taxon>
        <taxon>Mycobacteriaceae</taxon>
        <taxon>Mycobacterium</taxon>
    </lineage>
</organism>
<name>CPFC_MYCSK</name>
<comment type="function">
    <text evidence="1">Involved in coproporphyrin-dependent heme b biosynthesis. Catalyzes the insertion of ferrous iron into coproporphyrin III to form Fe-coproporphyrin III.</text>
</comment>
<comment type="catalytic activity">
    <reaction evidence="1">
        <text>Fe-coproporphyrin III + 2 H(+) = coproporphyrin III + Fe(2+)</text>
        <dbReference type="Rhea" id="RHEA:49572"/>
        <dbReference type="ChEBI" id="CHEBI:15378"/>
        <dbReference type="ChEBI" id="CHEBI:29033"/>
        <dbReference type="ChEBI" id="CHEBI:68438"/>
        <dbReference type="ChEBI" id="CHEBI:131725"/>
        <dbReference type="EC" id="4.99.1.9"/>
    </reaction>
    <physiologicalReaction direction="right-to-left" evidence="1">
        <dbReference type="Rhea" id="RHEA:49574"/>
    </physiologicalReaction>
</comment>
<comment type="pathway">
    <text evidence="1">Porphyrin-containing compound metabolism; protoheme biosynthesis.</text>
</comment>
<comment type="subcellular location">
    <subcellularLocation>
        <location evidence="1">Cytoplasm</location>
    </subcellularLocation>
</comment>
<comment type="similarity">
    <text evidence="1">Belongs to the ferrochelatase family.</text>
</comment>
<accession>A1UFU2</accession>
<dbReference type="EC" id="4.99.1.9" evidence="1"/>
<dbReference type="EMBL" id="CP000518">
    <property type="protein sequence ID" value="ABL91700.1"/>
    <property type="molecule type" value="Genomic_DNA"/>
</dbReference>
<dbReference type="SMR" id="A1UFU2"/>
<dbReference type="STRING" id="189918.Mkms_2503"/>
<dbReference type="KEGG" id="mkm:Mkms_2503"/>
<dbReference type="HOGENOM" id="CLU_018884_2_0_11"/>
<dbReference type="OrthoDB" id="9776380at2"/>
<dbReference type="UniPathway" id="UPA00252"/>
<dbReference type="GO" id="GO:0005737">
    <property type="term" value="C:cytoplasm"/>
    <property type="evidence" value="ECO:0007669"/>
    <property type="project" value="UniProtKB-SubCell"/>
</dbReference>
<dbReference type="GO" id="GO:0004325">
    <property type="term" value="F:ferrochelatase activity"/>
    <property type="evidence" value="ECO:0007669"/>
    <property type="project" value="UniProtKB-UniRule"/>
</dbReference>
<dbReference type="GO" id="GO:0046872">
    <property type="term" value="F:metal ion binding"/>
    <property type="evidence" value="ECO:0007669"/>
    <property type="project" value="UniProtKB-KW"/>
</dbReference>
<dbReference type="GO" id="GO:0006783">
    <property type="term" value="P:heme biosynthetic process"/>
    <property type="evidence" value="ECO:0007669"/>
    <property type="project" value="UniProtKB-UniRule"/>
</dbReference>
<dbReference type="CDD" id="cd00419">
    <property type="entry name" value="Ferrochelatase_C"/>
    <property type="match status" value="1"/>
</dbReference>
<dbReference type="CDD" id="cd03411">
    <property type="entry name" value="Ferrochelatase_N"/>
    <property type="match status" value="1"/>
</dbReference>
<dbReference type="Gene3D" id="3.40.50.1400">
    <property type="match status" value="2"/>
</dbReference>
<dbReference type="HAMAP" id="MF_00323">
    <property type="entry name" value="Ferrochelatase"/>
    <property type="match status" value="1"/>
</dbReference>
<dbReference type="InterPro" id="IPR001015">
    <property type="entry name" value="Ferrochelatase"/>
</dbReference>
<dbReference type="InterPro" id="IPR019772">
    <property type="entry name" value="Ferrochelatase_AS"/>
</dbReference>
<dbReference type="InterPro" id="IPR033644">
    <property type="entry name" value="Ferrochelatase_C"/>
</dbReference>
<dbReference type="InterPro" id="IPR033659">
    <property type="entry name" value="Ferrochelatase_N"/>
</dbReference>
<dbReference type="NCBIfam" id="TIGR00109">
    <property type="entry name" value="hemH"/>
    <property type="match status" value="1"/>
</dbReference>
<dbReference type="NCBIfam" id="NF000689">
    <property type="entry name" value="PRK00035.2-1"/>
    <property type="match status" value="1"/>
</dbReference>
<dbReference type="PANTHER" id="PTHR11108">
    <property type="entry name" value="FERROCHELATASE"/>
    <property type="match status" value="1"/>
</dbReference>
<dbReference type="PANTHER" id="PTHR11108:SF1">
    <property type="entry name" value="FERROCHELATASE, MITOCHONDRIAL"/>
    <property type="match status" value="1"/>
</dbReference>
<dbReference type="Pfam" id="PF00762">
    <property type="entry name" value="Ferrochelatase"/>
    <property type="match status" value="1"/>
</dbReference>
<dbReference type="SUPFAM" id="SSF53800">
    <property type="entry name" value="Chelatase"/>
    <property type="match status" value="1"/>
</dbReference>
<dbReference type="PROSITE" id="PS00534">
    <property type="entry name" value="FERROCHELATASE"/>
    <property type="match status" value="1"/>
</dbReference>